<dbReference type="EMBL" id="D32203">
    <property type="protein sequence ID" value="BAA06904.1"/>
    <property type="molecule type" value="Genomic_DNA"/>
</dbReference>
<dbReference type="EMBL" id="AE006468">
    <property type="protein sequence ID" value="AAL20828.1"/>
    <property type="molecule type" value="Genomic_DNA"/>
</dbReference>
<dbReference type="PIR" id="C55546">
    <property type="entry name" value="C55546"/>
</dbReference>
<dbReference type="RefSeq" id="NP_460869.1">
    <property type="nucleotide sequence ID" value="NC_003197.2"/>
</dbReference>
<dbReference type="RefSeq" id="WP_001233619.1">
    <property type="nucleotide sequence ID" value="NC_003197.2"/>
</dbReference>
<dbReference type="SMR" id="P0A1N4"/>
<dbReference type="STRING" id="99287.STM1912"/>
<dbReference type="PaxDb" id="99287-STM1912"/>
<dbReference type="GeneID" id="1253433"/>
<dbReference type="KEGG" id="stm:STM1912"/>
<dbReference type="PATRIC" id="fig|99287.12.peg.2028"/>
<dbReference type="HOGENOM" id="CLU_140250_0_0_6"/>
<dbReference type="OMA" id="NEFRFVY"/>
<dbReference type="PhylomeDB" id="P0A1N4"/>
<dbReference type="BioCyc" id="SENT99287:STM1912-MONOMER"/>
<dbReference type="Proteomes" id="UP000001014">
    <property type="component" value="Chromosome"/>
</dbReference>
<dbReference type="GO" id="GO:0044781">
    <property type="term" value="P:bacterial-type flagellum organization"/>
    <property type="evidence" value="ECO:0007669"/>
    <property type="project" value="UniProtKB-KW"/>
</dbReference>
<dbReference type="InterPro" id="IPR009420">
    <property type="entry name" value="FlhE"/>
</dbReference>
<dbReference type="Pfam" id="PF06366">
    <property type="entry name" value="FlhE"/>
    <property type="match status" value="1"/>
</dbReference>
<protein>
    <recommendedName>
        <fullName>Flagellar protein FlhE</fullName>
    </recommendedName>
</protein>
<reference key="1">
    <citation type="journal article" date="1994" name="J. Bacteriol.">
        <title>Molecular characterization of the Salmonella typhimurium flhB operon and its protein products.</title>
        <authorList>
            <person name="Minamino T."/>
            <person name="Iino T."/>
            <person name="Kutsukake K."/>
        </authorList>
    </citation>
    <scope>NUCLEOTIDE SEQUENCE [GENOMIC DNA]</scope>
    <scope>PROTEIN SEQUENCE OF 17-25</scope>
    <source>
        <strain>KK1004</strain>
    </source>
</reference>
<reference key="2">
    <citation type="journal article" date="2001" name="Nature">
        <title>Complete genome sequence of Salmonella enterica serovar Typhimurium LT2.</title>
        <authorList>
            <person name="McClelland M."/>
            <person name="Sanderson K.E."/>
            <person name="Spieth J."/>
            <person name="Clifton S.W."/>
            <person name="Latreille P."/>
            <person name="Courtney L."/>
            <person name="Porwollik S."/>
            <person name="Ali J."/>
            <person name="Dante M."/>
            <person name="Du F."/>
            <person name="Hou S."/>
            <person name="Layman D."/>
            <person name="Leonard S."/>
            <person name="Nguyen C."/>
            <person name="Scott K."/>
            <person name="Holmes A."/>
            <person name="Grewal N."/>
            <person name="Mulvaney E."/>
            <person name="Ryan E."/>
            <person name="Sun H."/>
            <person name="Florea L."/>
            <person name="Miller W."/>
            <person name="Stoneking T."/>
            <person name="Nhan M."/>
            <person name="Waterston R."/>
            <person name="Wilson R.K."/>
        </authorList>
    </citation>
    <scope>NUCLEOTIDE SEQUENCE [LARGE SCALE GENOMIC DNA]</scope>
    <source>
        <strain>LT2 / SGSC1412 / ATCC 700720</strain>
    </source>
</reference>
<comment type="function">
    <text>Not essential for flagellar formation and function.</text>
</comment>
<accession>P0A1N4</accession>
<accession>P40728</accession>
<feature type="signal peptide" evidence="1">
    <location>
        <begin position="1"/>
        <end position="16"/>
    </location>
</feature>
<feature type="chain" id="PRO_0000009349" description="Flagellar protein FlhE">
    <location>
        <begin position="17"/>
        <end position="130"/>
    </location>
</feature>
<keyword id="KW-1005">Bacterial flagellum biogenesis</keyword>
<keyword id="KW-0903">Direct protein sequencing</keyword>
<keyword id="KW-1185">Reference proteome</keyword>
<keyword id="KW-0732">Signal</keyword>
<evidence type="ECO:0000269" key="1">
    <source>
    </source>
</evidence>
<sequence>MRKWLALLLFPLTVQAAGEGAWQDSGMGVTLNYRGVSASSSPLSARQPVSGVMTLVAWRYELNGPTPAGLRVRLCSQSRCVELDGQSGTTHGFAHVPAVEPLRFVWEVPGGGRLIPALKVRSNQVIVNYR</sequence>
<name>FLHE_SALTY</name>
<proteinExistence type="evidence at protein level"/>
<gene>
    <name type="primary">flhE</name>
    <name type="ordered locus">STM1912</name>
</gene>
<organism>
    <name type="scientific">Salmonella typhimurium (strain LT2 / SGSC1412 / ATCC 700720)</name>
    <dbReference type="NCBI Taxonomy" id="99287"/>
    <lineage>
        <taxon>Bacteria</taxon>
        <taxon>Pseudomonadati</taxon>
        <taxon>Pseudomonadota</taxon>
        <taxon>Gammaproteobacteria</taxon>
        <taxon>Enterobacterales</taxon>
        <taxon>Enterobacteriaceae</taxon>
        <taxon>Salmonella</taxon>
    </lineage>
</organism>